<gene>
    <name evidence="1" type="primary">psaJ</name>
</gene>
<feature type="chain" id="PRO_0000354155" description="Photosystem I reaction center subunit IX">
    <location>
        <begin position="1"/>
        <end position="41"/>
    </location>
</feature>
<feature type="transmembrane region" description="Helical" evidence="1">
    <location>
        <begin position="7"/>
        <end position="27"/>
    </location>
</feature>
<reference key="1">
    <citation type="journal article" date="2007" name="BMC Genomics">
        <title>The chloroplast genome sequence of the green alga Leptosira terrestris: multiple losses of the inverted repeat and extensive genome rearrangements within the Trebouxiophyceae.</title>
        <authorList>
            <person name="de Cambiaire J.-C."/>
            <person name="Otis C."/>
            <person name="Turmel M."/>
            <person name="Lemieux C."/>
        </authorList>
    </citation>
    <scope>NUCLEOTIDE SEQUENCE [LARGE SCALE GENOMIC DNA]</scope>
    <source>
        <strain>CCAP 463/2 / UTEX 333</strain>
    </source>
</reference>
<proteinExistence type="inferred from homology"/>
<accession>A6YG80</accession>
<keyword id="KW-0150">Chloroplast</keyword>
<keyword id="KW-0472">Membrane</keyword>
<keyword id="KW-0602">Photosynthesis</keyword>
<keyword id="KW-0603">Photosystem I</keyword>
<keyword id="KW-0934">Plastid</keyword>
<keyword id="KW-0793">Thylakoid</keyword>
<keyword id="KW-0812">Transmembrane</keyword>
<keyword id="KW-1133">Transmembrane helix</keyword>
<evidence type="ECO:0000255" key="1">
    <source>
        <dbReference type="HAMAP-Rule" id="MF_00522"/>
    </source>
</evidence>
<organism>
    <name type="scientific">Pleurastrum terricola</name>
    <name type="common">Filamentous green alga</name>
    <name type="synonym">Leptosira terrestris</name>
    <dbReference type="NCBI Taxonomy" id="34116"/>
    <lineage>
        <taxon>Eukaryota</taxon>
        <taxon>Viridiplantae</taxon>
        <taxon>Chlorophyta</taxon>
        <taxon>core chlorophytes</taxon>
        <taxon>Chlorophyceae</taxon>
        <taxon>CS clade</taxon>
        <taxon>Chlamydomonadales</taxon>
        <taxon>Pleurastraceae</taxon>
        <taxon>Pleurastrum</taxon>
    </lineage>
</organism>
<comment type="function">
    <text evidence="1">May help in the organization of the PsaE and PsaF subunits.</text>
</comment>
<comment type="subcellular location">
    <subcellularLocation>
        <location evidence="1">Plastid</location>
        <location evidence="1">Chloroplast thylakoid membrane</location>
        <topology evidence="1">Single-pass membrane protein</topology>
    </subcellularLocation>
</comment>
<comment type="similarity">
    <text evidence="1">Belongs to the PsaJ family.</text>
</comment>
<name>PSAJ_PLETE</name>
<dbReference type="EMBL" id="EF506945">
    <property type="protein sequence ID" value="ABO69300.1"/>
    <property type="molecule type" value="Genomic_DNA"/>
</dbReference>
<dbReference type="RefSeq" id="YP_001382157.1">
    <property type="nucleotide sequence ID" value="NC_009681.1"/>
</dbReference>
<dbReference type="SMR" id="A6YG80"/>
<dbReference type="GeneID" id="5383797"/>
<dbReference type="GO" id="GO:0009535">
    <property type="term" value="C:chloroplast thylakoid membrane"/>
    <property type="evidence" value="ECO:0007669"/>
    <property type="project" value="UniProtKB-SubCell"/>
</dbReference>
<dbReference type="GO" id="GO:0009522">
    <property type="term" value="C:photosystem I"/>
    <property type="evidence" value="ECO:0007669"/>
    <property type="project" value="UniProtKB-KW"/>
</dbReference>
<dbReference type="GO" id="GO:0015979">
    <property type="term" value="P:photosynthesis"/>
    <property type="evidence" value="ECO:0007669"/>
    <property type="project" value="UniProtKB-UniRule"/>
</dbReference>
<dbReference type="Gene3D" id="1.20.5.510">
    <property type="entry name" value="Single helix bin"/>
    <property type="match status" value="1"/>
</dbReference>
<dbReference type="HAMAP" id="MF_00522">
    <property type="entry name" value="PSI_PsaJ"/>
    <property type="match status" value="1"/>
</dbReference>
<dbReference type="InterPro" id="IPR002615">
    <property type="entry name" value="PSI_PsaJ"/>
</dbReference>
<dbReference type="InterPro" id="IPR036062">
    <property type="entry name" value="PSI_PsaJ_sf"/>
</dbReference>
<dbReference type="PANTHER" id="PTHR36082">
    <property type="match status" value="1"/>
</dbReference>
<dbReference type="PANTHER" id="PTHR36082:SF2">
    <property type="entry name" value="PHOTOSYSTEM I REACTION CENTER SUBUNIT IX"/>
    <property type="match status" value="1"/>
</dbReference>
<dbReference type="Pfam" id="PF01701">
    <property type="entry name" value="PSI_PsaJ"/>
    <property type="match status" value="1"/>
</dbReference>
<dbReference type="SUPFAM" id="SSF81544">
    <property type="entry name" value="Subunit IX of photosystem I reaction centre, PsaJ"/>
    <property type="match status" value="1"/>
</dbReference>
<protein>
    <recommendedName>
        <fullName evidence="1">Photosystem I reaction center subunit IX</fullName>
    </recommendedName>
    <alternativeName>
        <fullName evidence="1">PSI-J</fullName>
    </alternativeName>
</protein>
<sequence>MTNFTTYLSTAPVVALIWFTFTAGLLIEINRFFPDPLVFSF</sequence>
<geneLocation type="chloroplast"/>